<feature type="chain" id="PRO_1000166063" description="Large ribosomal subunit protein uL22">
    <location>
        <begin position="1"/>
        <end position="111"/>
    </location>
</feature>
<name>RL22_GEODF</name>
<reference key="1">
    <citation type="submission" date="2009-01" db="EMBL/GenBank/DDBJ databases">
        <title>Complete sequence of Geobacter sp. FRC-32.</title>
        <authorList>
            <consortium name="US DOE Joint Genome Institute"/>
            <person name="Lucas S."/>
            <person name="Copeland A."/>
            <person name="Lapidus A."/>
            <person name="Glavina del Rio T."/>
            <person name="Dalin E."/>
            <person name="Tice H."/>
            <person name="Bruce D."/>
            <person name="Goodwin L."/>
            <person name="Pitluck S."/>
            <person name="Saunders E."/>
            <person name="Brettin T."/>
            <person name="Detter J.C."/>
            <person name="Han C."/>
            <person name="Larimer F."/>
            <person name="Land M."/>
            <person name="Hauser L."/>
            <person name="Kyrpides N."/>
            <person name="Ovchinnikova G."/>
            <person name="Kostka J."/>
            <person name="Richardson P."/>
        </authorList>
    </citation>
    <scope>NUCLEOTIDE SEQUENCE [LARGE SCALE GENOMIC DNA]</scope>
    <source>
        <strain>DSM 22248 / JCM 15807 / FRC-32</strain>
    </source>
</reference>
<gene>
    <name evidence="1" type="primary">rplV</name>
    <name type="ordered locus">Geob_3620</name>
</gene>
<accession>B9M6H3</accession>
<protein>
    <recommendedName>
        <fullName evidence="1">Large ribosomal subunit protein uL22</fullName>
    </recommendedName>
    <alternativeName>
        <fullName evidence="2">50S ribosomal protein L22</fullName>
    </alternativeName>
</protein>
<dbReference type="EMBL" id="CP001390">
    <property type="protein sequence ID" value="ACM21961.1"/>
    <property type="molecule type" value="Genomic_DNA"/>
</dbReference>
<dbReference type="RefSeq" id="WP_012648688.1">
    <property type="nucleotide sequence ID" value="NC_011979.1"/>
</dbReference>
<dbReference type="SMR" id="B9M6H3"/>
<dbReference type="STRING" id="316067.Geob_3620"/>
<dbReference type="KEGG" id="geo:Geob_3620"/>
<dbReference type="eggNOG" id="COG0091">
    <property type="taxonomic scope" value="Bacteria"/>
</dbReference>
<dbReference type="HOGENOM" id="CLU_083987_3_3_7"/>
<dbReference type="OrthoDB" id="9805969at2"/>
<dbReference type="Proteomes" id="UP000007721">
    <property type="component" value="Chromosome"/>
</dbReference>
<dbReference type="GO" id="GO:0022625">
    <property type="term" value="C:cytosolic large ribosomal subunit"/>
    <property type="evidence" value="ECO:0007669"/>
    <property type="project" value="TreeGrafter"/>
</dbReference>
<dbReference type="GO" id="GO:0019843">
    <property type="term" value="F:rRNA binding"/>
    <property type="evidence" value="ECO:0007669"/>
    <property type="project" value="UniProtKB-UniRule"/>
</dbReference>
<dbReference type="GO" id="GO:0003735">
    <property type="term" value="F:structural constituent of ribosome"/>
    <property type="evidence" value="ECO:0007669"/>
    <property type="project" value="InterPro"/>
</dbReference>
<dbReference type="GO" id="GO:0006412">
    <property type="term" value="P:translation"/>
    <property type="evidence" value="ECO:0007669"/>
    <property type="project" value="UniProtKB-UniRule"/>
</dbReference>
<dbReference type="CDD" id="cd00336">
    <property type="entry name" value="Ribosomal_L22"/>
    <property type="match status" value="1"/>
</dbReference>
<dbReference type="Gene3D" id="3.90.470.10">
    <property type="entry name" value="Ribosomal protein L22/L17"/>
    <property type="match status" value="1"/>
</dbReference>
<dbReference type="HAMAP" id="MF_01331_B">
    <property type="entry name" value="Ribosomal_uL22_B"/>
    <property type="match status" value="1"/>
</dbReference>
<dbReference type="InterPro" id="IPR001063">
    <property type="entry name" value="Ribosomal_uL22"/>
</dbReference>
<dbReference type="InterPro" id="IPR005727">
    <property type="entry name" value="Ribosomal_uL22_bac/chlpt-type"/>
</dbReference>
<dbReference type="InterPro" id="IPR047867">
    <property type="entry name" value="Ribosomal_uL22_bac/org-type"/>
</dbReference>
<dbReference type="InterPro" id="IPR018260">
    <property type="entry name" value="Ribosomal_uL22_CS"/>
</dbReference>
<dbReference type="InterPro" id="IPR036394">
    <property type="entry name" value="Ribosomal_uL22_sf"/>
</dbReference>
<dbReference type="NCBIfam" id="TIGR01044">
    <property type="entry name" value="rplV_bact"/>
    <property type="match status" value="1"/>
</dbReference>
<dbReference type="PANTHER" id="PTHR13501">
    <property type="entry name" value="CHLOROPLAST 50S RIBOSOMAL PROTEIN L22-RELATED"/>
    <property type="match status" value="1"/>
</dbReference>
<dbReference type="PANTHER" id="PTHR13501:SF8">
    <property type="entry name" value="LARGE RIBOSOMAL SUBUNIT PROTEIN UL22M"/>
    <property type="match status" value="1"/>
</dbReference>
<dbReference type="Pfam" id="PF00237">
    <property type="entry name" value="Ribosomal_L22"/>
    <property type="match status" value="1"/>
</dbReference>
<dbReference type="SUPFAM" id="SSF54843">
    <property type="entry name" value="Ribosomal protein L22"/>
    <property type="match status" value="1"/>
</dbReference>
<dbReference type="PROSITE" id="PS00464">
    <property type="entry name" value="RIBOSOMAL_L22"/>
    <property type="match status" value="1"/>
</dbReference>
<organism>
    <name type="scientific">Geotalea daltonii (strain DSM 22248 / JCM 15807 / FRC-32)</name>
    <name type="common">Geobacter daltonii</name>
    <dbReference type="NCBI Taxonomy" id="316067"/>
    <lineage>
        <taxon>Bacteria</taxon>
        <taxon>Pseudomonadati</taxon>
        <taxon>Thermodesulfobacteriota</taxon>
        <taxon>Desulfuromonadia</taxon>
        <taxon>Geobacterales</taxon>
        <taxon>Geobacteraceae</taxon>
        <taxon>Geotalea</taxon>
    </lineage>
</organism>
<sequence>MESTAKLSFARLSPRKTRLVVDMVRGKGIQNALNTLRFSPQPSAKLVSKLLSSAVANAEQKGVADVDRLYVKTIYVDGGTVLKRFVPRAMGRASKIRKPTSHICVVLAEKK</sequence>
<keyword id="KW-1185">Reference proteome</keyword>
<keyword id="KW-0687">Ribonucleoprotein</keyword>
<keyword id="KW-0689">Ribosomal protein</keyword>
<keyword id="KW-0694">RNA-binding</keyword>
<keyword id="KW-0699">rRNA-binding</keyword>
<comment type="function">
    <text evidence="1">This protein binds specifically to 23S rRNA; its binding is stimulated by other ribosomal proteins, e.g. L4, L17, and L20. It is important during the early stages of 50S assembly. It makes multiple contacts with different domains of the 23S rRNA in the assembled 50S subunit and ribosome (By similarity).</text>
</comment>
<comment type="function">
    <text evidence="1">The globular domain of the protein is located near the polypeptide exit tunnel on the outside of the subunit, while an extended beta-hairpin is found that lines the wall of the exit tunnel in the center of the 70S ribosome.</text>
</comment>
<comment type="subunit">
    <text evidence="1">Part of the 50S ribosomal subunit.</text>
</comment>
<comment type="similarity">
    <text evidence="1">Belongs to the universal ribosomal protein uL22 family.</text>
</comment>
<proteinExistence type="inferred from homology"/>
<evidence type="ECO:0000255" key="1">
    <source>
        <dbReference type="HAMAP-Rule" id="MF_01331"/>
    </source>
</evidence>
<evidence type="ECO:0000305" key="2"/>